<reference key="1">
    <citation type="submission" date="2002-07" db="EMBL/GenBank/DDBJ databases">
        <title>Novel human cDNA clones with function of promoting mice NIH/3T3 cells' growth.</title>
        <authorList>
            <person name="Wan D.F."/>
            <person name="Qin W.X."/>
            <person name="Zhou X.M."/>
            <person name="Zhang P.P."/>
            <person name="Jiang H.Q."/>
            <person name="Gu J.R."/>
        </authorList>
    </citation>
    <scope>NUCLEOTIDE SEQUENCE [LARGE SCALE MRNA]</scope>
</reference>
<reference key="2">
    <citation type="journal article" date="2001" name="Nature">
        <title>The DNA sequence and comparative analysis of human chromosome 20.</title>
        <authorList>
            <person name="Deloukas P."/>
            <person name="Matthews L.H."/>
            <person name="Ashurst J.L."/>
            <person name="Burton J."/>
            <person name="Gilbert J.G.R."/>
            <person name="Jones M."/>
            <person name="Stavrides G."/>
            <person name="Almeida J.P."/>
            <person name="Babbage A.K."/>
            <person name="Bagguley C.L."/>
            <person name="Bailey J."/>
            <person name="Barlow K.F."/>
            <person name="Bates K.N."/>
            <person name="Beard L.M."/>
            <person name="Beare D.M."/>
            <person name="Beasley O.P."/>
            <person name="Bird C.P."/>
            <person name="Blakey S.E."/>
            <person name="Bridgeman A.M."/>
            <person name="Brown A.J."/>
            <person name="Buck D."/>
            <person name="Burrill W.D."/>
            <person name="Butler A.P."/>
            <person name="Carder C."/>
            <person name="Carter N.P."/>
            <person name="Chapman J.C."/>
            <person name="Clamp M."/>
            <person name="Clark G."/>
            <person name="Clark L.N."/>
            <person name="Clark S.Y."/>
            <person name="Clee C.M."/>
            <person name="Clegg S."/>
            <person name="Cobley V.E."/>
            <person name="Collier R.E."/>
            <person name="Connor R.E."/>
            <person name="Corby N.R."/>
            <person name="Coulson A."/>
            <person name="Coville G.J."/>
            <person name="Deadman R."/>
            <person name="Dhami P.D."/>
            <person name="Dunn M."/>
            <person name="Ellington A.G."/>
            <person name="Frankland J.A."/>
            <person name="Fraser A."/>
            <person name="French L."/>
            <person name="Garner P."/>
            <person name="Grafham D.V."/>
            <person name="Griffiths C."/>
            <person name="Griffiths M.N.D."/>
            <person name="Gwilliam R."/>
            <person name="Hall R.E."/>
            <person name="Hammond S."/>
            <person name="Harley J.L."/>
            <person name="Heath P.D."/>
            <person name="Ho S."/>
            <person name="Holden J.L."/>
            <person name="Howden P.J."/>
            <person name="Huckle E."/>
            <person name="Hunt A.R."/>
            <person name="Hunt S.E."/>
            <person name="Jekosch K."/>
            <person name="Johnson C.M."/>
            <person name="Johnson D."/>
            <person name="Kay M.P."/>
            <person name="Kimberley A.M."/>
            <person name="King A."/>
            <person name="Knights A."/>
            <person name="Laird G.K."/>
            <person name="Lawlor S."/>
            <person name="Lehvaeslaiho M.H."/>
            <person name="Leversha M.A."/>
            <person name="Lloyd C."/>
            <person name="Lloyd D.M."/>
            <person name="Lovell J.D."/>
            <person name="Marsh V.L."/>
            <person name="Martin S.L."/>
            <person name="McConnachie L.J."/>
            <person name="McLay K."/>
            <person name="McMurray A.A."/>
            <person name="Milne S.A."/>
            <person name="Mistry D."/>
            <person name="Moore M.J.F."/>
            <person name="Mullikin J.C."/>
            <person name="Nickerson T."/>
            <person name="Oliver K."/>
            <person name="Parker A."/>
            <person name="Patel R."/>
            <person name="Pearce T.A.V."/>
            <person name="Peck A.I."/>
            <person name="Phillimore B.J.C.T."/>
            <person name="Prathalingam S.R."/>
            <person name="Plumb R.W."/>
            <person name="Ramsay H."/>
            <person name="Rice C.M."/>
            <person name="Ross M.T."/>
            <person name="Scott C.E."/>
            <person name="Sehra H.K."/>
            <person name="Shownkeen R."/>
            <person name="Sims S."/>
            <person name="Skuce C.D."/>
            <person name="Smith M.L."/>
            <person name="Soderlund C."/>
            <person name="Steward C.A."/>
            <person name="Sulston J.E."/>
            <person name="Swann R.M."/>
            <person name="Sycamore N."/>
            <person name="Taylor R."/>
            <person name="Tee L."/>
            <person name="Thomas D.W."/>
            <person name="Thorpe A."/>
            <person name="Tracey A."/>
            <person name="Tromans A.C."/>
            <person name="Vaudin M."/>
            <person name="Wall M."/>
            <person name="Wallis J.M."/>
            <person name="Whitehead S.L."/>
            <person name="Whittaker P."/>
            <person name="Willey D.L."/>
            <person name="Williams L."/>
            <person name="Williams S.A."/>
            <person name="Wilming L."/>
            <person name="Wray P.W."/>
            <person name="Hubbard T."/>
            <person name="Durbin R.M."/>
            <person name="Bentley D.R."/>
            <person name="Beck S."/>
            <person name="Rogers J."/>
        </authorList>
    </citation>
    <scope>NUCLEOTIDE SEQUENCE [LARGE SCALE GENOMIC DNA]</scope>
</reference>
<evidence type="ECO:0000250" key="1"/>
<evidence type="ECO:0000255" key="2">
    <source>
        <dbReference type="PROSITE-ProRule" id="PRU00042"/>
    </source>
</evidence>
<evidence type="ECO:0000256" key="3">
    <source>
        <dbReference type="SAM" id="MobiDB-lite"/>
    </source>
</evidence>
<evidence type="ECO:0000305" key="4"/>
<keyword id="KW-0238">DNA-binding</keyword>
<keyword id="KW-0479">Metal-binding</keyword>
<keyword id="KW-0539">Nucleus</keyword>
<keyword id="KW-1267">Proteomics identification</keyword>
<keyword id="KW-1185">Reference proteome</keyword>
<keyword id="KW-0677">Repeat</keyword>
<keyword id="KW-0804">Transcription</keyword>
<keyword id="KW-0805">Transcription regulation</keyword>
<keyword id="KW-0862">Zinc</keyword>
<keyword id="KW-0863">Zinc-finger</keyword>
<name>SCRT2_HUMAN</name>
<sequence length="307" mass="32584">MPRSFLVKKIKGDGFQCSGVPAPTYHPLETAYVLPGARGPPGDNGYAPHRLPPSSYDADQKPGLELAPAEPAYPPAAPEEYSDPESPQSSLSARYFRGEAAVTDSYSMDAFFISDGRSRRRRGGGGGDAGGSGDAGGAGGRAGRAGAQAGGGHRHACAECGKTYATSSNLSRHKQTHRSLDSQLARKCPTCGKAYVSMPALAMHLLTHNLRHKCGVCGKAFSRPWLLQGHMRSHTGEKPFGCAHCGKAFADRSNLRAHMQTHSAFKHYRCRQCDKSFALKSYLHKHCEAACAKAAEPPPPTPAGPAS</sequence>
<proteinExistence type="evidence at protein level"/>
<comment type="function">
    <text>May be involved in transcriptional regulation.</text>
</comment>
<comment type="subcellular location">
    <subcellularLocation>
        <location evidence="4">Nucleus</location>
    </subcellularLocation>
</comment>
<comment type="similarity">
    <text evidence="4">Belongs to the snail C2H2-type zinc-finger protein family.</text>
</comment>
<dbReference type="EMBL" id="AY129025">
    <property type="protein sequence ID" value="AAM98768.1"/>
    <property type="molecule type" value="mRNA"/>
</dbReference>
<dbReference type="EMBL" id="AL121758">
    <property type="status" value="NOT_ANNOTATED_CDS"/>
    <property type="molecule type" value="Genomic_DNA"/>
</dbReference>
<dbReference type="CCDS" id="CCDS13006.1"/>
<dbReference type="RefSeq" id="NP_149120.1">
    <property type="nucleotide sequence ID" value="NM_033129.4"/>
</dbReference>
<dbReference type="SMR" id="Q9NQ03"/>
<dbReference type="BioGRID" id="124568">
    <property type="interactions" value="24"/>
</dbReference>
<dbReference type="FunCoup" id="Q9NQ03">
    <property type="interactions" value="107"/>
</dbReference>
<dbReference type="IntAct" id="Q9NQ03">
    <property type="interactions" value="5"/>
</dbReference>
<dbReference type="GlyGen" id="Q9NQ03">
    <property type="glycosylation" value="2 sites, 1 O-linked glycan (1 site)"/>
</dbReference>
<dbReference type="iPTMnet" id="Q9NQ03"/>
<dbReference type="PhosphoSitePlus" id="Q9NQ03"/>
<dbReference type="BioMuta" id="SCRT2"/>
<dbReference type="DMDM" id="46397045"/>
<dbReference type="MassIVE" id="Q9NQ03"/>
<dbReference type="PaxDb" id="9606-ENSP00000246104"/>
<dbReference type="PeptideAtlas" id="Q9NQ03"/>
<dbReference type="ProteomicsDB" id="82051"/>
<dbReference type="Antibodypedia" id="23001">
    <property type="antibodies" value="31 antibodies from 11 providers"/>
</dbReference>
<dbReference type="DNASU" id="85508"/>
<dbReference type="Ensembl" id="ENST00000246104.7">
    <property type="protein sequence ID" value="ENSP00000246104.5"/>
    <property type="gene ID" value="ENSG00000215397.4"/>
</dbReference>
<dbReference type="GeneID" id="85508"/>
<dbReference type="KEGG" id="hsa:85508"/>
<dbReference type="MANE-Select" id="ENST00000246104.7">
    <property type="protein sequence ID" value="ENSP00000246104.5"/>
    <property type="RefSeq nucleotide sequence ID" value="NM_033129.4"/>
    <property type="RefSeq protein sequence ID" value="NP_149120.1"/>
</dbReference>
<dbReference type="UCSC" id="uc002wec.3">
    <property type="organism name" value="human"/>
</dbReference>
<dbReference type="AGR" id="HGNC:15952"/>
<dbReference type="CTD" id="85508"/>
<dbReference type="DisGeNET" id="85508"/>
<dbReference type="GeneCards" id="SCRT2"/>
<dbReference type="HGNC" id="HGNC:15952">
    <property type="gene designation" value="SCRT2"/>
</dbReference>
<dbReference type="HPA" id="ENSG00000215397">
    <property type="expression patterns" value="Group enriched (brain, retina)"/>
</dbReference>
<dbReference type="neXtProt" id="NX_Q9NQ03"/>
<dbReference type="OpenTargets" id="ENSG00000215397"/>
<dbReference type="PharmGKB" id="PA35016"/>
<dbReference type="VEuPathDB" id="HostDB:ENSG00000215397"/>
<dbReference type="eggNOG" id="KOG2462">
    <property type="taxonomic scope" value="Eukaryota"/>
</dbReference>
<dbReference type="GeneTree" id="ENSGT00940000154491"/>
<dbReference type="HOGENOM" id="CLU_002678_42_3_1"/>
<dbReference type="InParanoid" id="Q9NQ03"/>
<dbReference type="OMA" id="TQRHTCS"/>
<dbReference type="OrthoDB" id="5428132at2759"/>
<dbReference type="PAN-GO" id="Q9NQ03">
    <property type="GO annotations" value="3 GO annotations based on evolutionary models"/>
</dbReference>
<dbReference type="PhylomeDB" id="Q9NQ03"/>
<dbReference type="TreeFam" id="TF315515"/>
<dbReference type="PathwayCommons" id="Q9NQ03"/>
<dbReference type="SignaLink" id="Q9NQ03"/>
<dbReference type="BioGRID-ORCS" id="85508">
    <property type="hits" value="7 hits in 1165 CRISPR screens"/>
</dbReference>
<dbReference type="GenomeRNAi" id="85508"/>
<dbReference type="Pharos" id="Q9NQ03">
    <property type="development level" value="Tdark"/>
</dbReference>
<dbReference type="PRO" id="PR:Q9NQ03"/>
<dbReference type="Proteomes" id="UP000005640">
    <property type="component" value="Chromosome 20"/>
</dbReference>
<dbReference type="RNAct" id="Q9NQ03">
    <property type="molecule type" value="protein"/>
</dbReference>
<dbReference type="Bgee" id="ENSG00000215397">
    <property type="expression patterns" value="Expressed in ganglionic eminence and 22 other cell types or tissues"/>
</dbReference>
<dbReference type="GO" id="GO:0000785">
    <property type="term" value="C:chromatin"/>
    <property type="evidence" value="ECO:0000250"/>
    <property type="project" value="BHF-UCL"/>
</dbReference>
<dbReference type="GO" id="GO:0005634">
    <property type="term" value="C:nucleus"/>
    <property type="evidence" value="ECO:0007669"/>
    <property type="project" value="UniProtKB-SubCell"/>
</dbReference>
<dbReference type="GO" id="GO:0000981">
    <property type="term" value="F:DNA-binding transcription factor activity, RNA polymerase II-specific"/>
    <property type="evidence" value="ECO:0000318"/>
    <property type="project" value="GO_Central"/>
</dbReference>
<dbReference type="GO" id="GO:0001227">
    <property type="term" value="F:DNA-binding transcription repressor activity, RNA polymerase II-specific"/>
    <property type="evidence" value="ECO:0000250"/>
    <property type="project" value="BHF-UCL"/>
</dbReference>
<dbReference type="GO" id="GO:0070888">
    <property type="term" value="F:E-box binding"/>
    <property type="evidence" value="ECO:0000250"/>
    <property type="project" value="BHF-UCL"/>
</dbReference>
<dbReference type="GO" id="GO:0000978">
    <property type="term" value="F:RNA polymerase II cis-regulatory region sequence-specific DNA binding"/>
    <property type="evidence" value="ECO:0000318"/>
    <property type="project" value="GO_Central"/>
</dbReference>
<dbReference type="GO" id="GO:1990837">
    <property type="term" value="F:sequence-specific double-stranded DNA binding"/>
    <property type="evidence" value="ECO:0000314"/>
    <property type="project" value="ARUK-UCL"/>
</dbReference>
<dbReference type="GO" id="GO:0008270">
    <property type="term" value="F:zinc ion binding"/>
    <property type="evidence" value="ECO:0007669"/>
    <property type="project" value="UniProtKB-KW"/>
</dbReference>
<dbReference type="GO" id="GO:1902042">
    <property type="term" value="P:negative regulation of extrinsic apoptotic signaling pathway via death domain receptors"/>
    <property type="evidence" value="ECO:0000250"/>
    <property type="project" value="BHF-UCL"/>
</dbReference>
<dbReference type="GO" id="GO:0000122">
    <property type="term" value="P:negative regulation of transcription by RNA polymerase II"/>
    <property type="evidence" value="ECO:0000250"/>
    <property type="project" value="BHF-UCL"/>
</dbReference>
<dbReference type="GO" id="GO:0006355">
    <property type="term" value="P:regulation of DNA-templated transcription"/>
    <property type="evidence" value="ECO:0000318"/>
    <property type="project" value="GO_Central"/>
</dbReference>
<dbReference type="GO" id="GO:2001222">
    <property type="term" value="P:regulation of neuron migration"/>
    <property type="evidence" value="ECO:0007669"/>
    <property type="project" value="Ensembl"/>
</dbReference>
<dbReference type="FunFam" id="3.30.160.60:FF:000560">
    <property type="entry name" value="Scratch family transcriptional repressor 1"/>
    <property type="match status" value="1"/>
</dbReference>
<dbReference type="FunFam" id="3.30.160.60:FF:000043">
    <property type="entry name" value="Scratch family zinc finger 2"/>
    <property type="match status" value="1"/>
</dbReference>
<dbReference type="FunFam" id="3.30.160.60:FF:000169">
    <property type="entry name" value="transcriptional repressor scratch 2"/>
    <property type="match status" value="1"/>
</dbReference>
<dbReference type="Gene3D" id="3.30.160.60">
    <property type="entry name" value="Classic Zinc Finger"/>
    <property type="match status" value="4"/>
</dbReference>
<dbReference type="InterPro" id="IPR050527">
    <property type="entry name" value="Snail/Krueppel_Znf"/>
</dbReference>
<dbReference type="InterPro" id="IPR036236">
    <property type="entry name" value="Znf_C2H2_sf"/>
</dbReference>
<dbReference type="InterPro" id="IPR013087">
    <property type="entry name" value="Znf_C2H2_type"/>
</dbReference>
<dbReference type="PANTHER" id="PTHR24388:SF48">
    <property type="entry name" value="TRANSCRIPTIONAL REPRESSOR SCRATCH 2"/>
    <property type="match status" value="1"/>
</dbReference>
<dbReference type="PANTHER" id="PTHR24388">
    <property type="entry name" value="ZINC FINGER PROTEIN"/>
    <property type="match status" value="1"/>
</dbReference>
<dbReference type="Pfam" id="PF00096">
    <property type="entry name" value="zf-C2H2"/>
    <property type="match status" value="4"/>
</dbReference>
<dbReference type="SMART" id="SM00355">
    <property type="entry name" value="ZnF_C2H2"/>
    <property type="match status" value="5"/>
</dbReference>
<dbReference type="SUPFAM" id="SSF57667">
    <property type="entry name" value="beta-beta-alpha zinc fingers"/>
    <property type="match status" value="3"/>
</dbReference>
<dbReference type="PROSITE" id="PS00028">
    <property type="entry name" value="ZINC_FINGER_C2H2_1"/>
    <property type="match status" value="4"/>
</dbReference>
<dbReference type="PROSITE" id="PS50157">
    <property type="entry name" value="ZINC_FINGER_C2H2_2"/>
    <property type="match status" value="5"/>
</dbReference>
<protein>
    <recommendedName>
        <fullName>Transcriptional repressor scratch 2</fullName>
    </recommendedName>
    <alternativeName>
        <fullName>Scratch homolog 2 zinc finger protein</fullName>
    </alternativeName>
</protein>
<accession>Q9NQ03</accession>
<feature type="chain" id="PRO_0000047038" description="Transcriptional repressor scratch 2">
    <location>
        <begin position="1"/>
        <end position="307"/>
    </location>
</feature>
<feature type="zinc finger region" description="C2H2-type 1" evidence="2">
    <location>
        <begin position="155"/>
        <end position="177"/>
    </location>
</feature>
<feature type="zinc finger region" description="C2H2-type 2" evidence="2">
    <location>
        <begin position="186"/>
        <end position="208"/>
    </location>
</feature>
<feature type="zinc finger region" description="C2H2-type 3" evidence="2">
    <location>
        <begin position="212"/>
        <end position="234"/>
    </location>
</feature>
<feature type="zinc finger region" description="C2H2-type 4" evidence="2">
    <location>
        <begin position="240"/>
        <end position="262"/>
    </location>
</feature>
<feature type="zinc finger region" description="C2H2-type 5; atypical" evidence="2">
    <location>
        <begin position="268"/>
        <end position="291"/>
    </location>
</feature>
<feature type="region of interest" description="SNAG domain" evidence="1">
    <location>
        <begin position="1"/>
        <end position="20"/>
    </location>
</feature>
<feature type="region of interest" description="Disordered" evidence="3">
    <location>
        <begin position="34"/>
        <end position="90"/>
    </location>
</feature>
<feature type="region of interest" description="Disordered" evidence="3">
    <location>
        <begin position="116"/>
        <end position="148"/>
    </location>
</feature>
<feature type="compositionally biased region" description="Gly residues" evidence="3">
    <location>
        <begin position="124"/>
        <end position="148"/>
    </location>
</feature>
<gene>
    <name type="primary">SCRT2</name>
    <name type="ORF">FP7030</name>
</gene>
<organism>
    <name type="scientific">Homo sapiens</name>
    <name type="common">Human</name>
    <dbReference type="NCBI Taxonomy" id="9606"/>
    <lineage>
        <taxon>Eukaryota</taxon>
        <taxon>Metazoa</taxon>
        <taxon>Chordata</taxon>
        <taxon>Craniata</taxon>
        <taxon>Vertebrata</taxon>
        <taxon>Euteleostomi</taxon>
        <taxon>Mammalia</taxon>
        <taxon>Eutheria</taxon>
        <taxon>Euarchontoglires</taxon>
        <taxon>Primates</taxon>
        <taxon>Haplorrhini</taxon>
        <taxon>Catarrhini</taxon>
        <taxon>Hominidae</taxon>
        <taxon>Homo</taxon>
    </lineage>
</organism>